<name>KEX1_ASPFU</name>
<reference key="1">
    <citation type="journal article" date="2005" name="Nature">
        <title>Genomic sequence of the pathogenic and allergenic filamentous fungus Aspergillus fumigatus.</title>
        <authorList>
            <person name="Nierman W.C."/>
            <person name="Pain A."/>
            <person name="Anderson M.J."/>
            <person name="Wortman J.R."/>
            <person name="Kim H.S."/>
            <person name="Arroyo J."/>
            <person name="Berriman M."/>
            <person name="Abe K."/>
            <person name="Archer D.B."/>
            <person name="Bermejo C."/>
            <person name="Bennett J.W."/>
            <person name="Bowyer P."/>
            <person name="Chen D."/>
            <person name="Collins M."/>
            <person name="Coulsen R."/>
            <person name="Davies R."/>
            <person name="Dyer P.S."/>
            <person name="Farman M.L."/>
            <person name="Fedorova N."/>
            <person name="Fedorova N.D."/>
            <person name="Feldblyum T.V."/>
            <person name="Fischer R."/>
            <person name="Fosker N."/>
            <person name="Fraser A."/>
            <person name="Garcia J.L."/>
            <person name="Garcia M.J."/>
            <person name="Goble A."/>
            <person name="Goldman G.H."/>
            <person name="Gomi K."/>
            <person name="Griffith-Jones S."/>
            <person name="Gwilliam R."/>
            <person name="Haas B.J."/>
            <person name="Haas H."/>
            <person name="Harris D.E."/>
            <person name="Horiuchi H."/>
            <person name="Huang J."/>
            <person name="Humphray S."/>
            <person name="Jimenez J."/>
            <person name="Keller N."/>
            <person name="Khouri H."/>
            <person name="Kitamoto K."/>
            <person name="Kobayashi T."/>
            <person name="Konzack S."/>
            <person name="Kulkarni R."/>
            <person name="Kumagai T."/>
            <person name="Lafton A."/>
            <person name="Latge J.-P."/>
            <person name="Li W."/>
            <person name="Lord A."/>
            <person name="Lu C."/>
            <person name="Majoros W.H."/>
            <person name="May G.S."/>
            <person name="Miller B.L."/>
            <person name="Mohamoud Y."/>
            <person name="Molina M."/>
            <person name="Monod M."/>
            <person name="Mouyna I."/>
            <person name="Mulligan S."/>
            <person name="Murphy L.D."/>
            <person name="O'Neil S."/>
            <person name="Paulsen I."/>
            <person name="Penalva M.A."/>
            <person name="Pertea M."/>
            <person name="Price C."/>
            <person name="Pritchard B.L."/>
            <person name="Quail M.A."/>
            <person name="Rabbinowitsch E."/>
            <person name="Rawlins N."/>
            <person name="Rajandream M.A."/>
            <person name="Reichard U."/>
            <person name="Renauld H."/>
            <person name="Robson G.D."/>
            <person name="Rodriguez de Cordoba S."/>
            <person name="Rodriguez-Pena J.M."/>
            <person name="Ronning C.M."/>
            <person name="Rutter S."/>
            <person name="Salzberg S.L."/>
            <person name="Sanchez M."/>
            <person name="Sanchez-Ferrero J.C."/>
            <person name="Saunders D."/>
            <person name="Seeger K."/>
            <person name="Squares R."/>
            <person name="Squares S."/>
            <person name="Takeuchi M."/>
            <person name="Tekaia F."/>
            <person name="Turner G."/>
            <person name="Vazquez de Aldana C.R."/>
            <person name="Weidman J."/>
            <person name="White O."/>
            <person name="Woodward J.R."/>
            <person name="Yu J.-H."/>
            <person name="Fraser C.M."/>
            <person name="Galagan J.E."/>
            <person name="Asai K."/>
            <person name="Machida M."/>
            <person name="Hall N."/>
            <person name="Barrell B.G."/>
            <person name="Denning D.W."/>
        </authorList>
    </citation>
    <scope>NUCLEOTIDE SEQUENCE [LARGE SCALE GENOMIC DNA]</scope>
    <source>
        <strain>ATCC MYA-4609 / CBS 101355 / FGSC A1100 / Af293</strain>
    </source>
</reference>
<proteinExistence type="inferred from homology"/>
<protein>
    <recommendedName>
        <fullName>Pheromone-processing carboxypeptidase kex1</fullName>
        <ecNumber>3.4.16.6</ecNumber>
    </recommendedName>
    <alternativeName>
        <fullName>Carboxypeptidase D</fullName>
    </alternativeName>
</protein>
<feature type="signal peptide" evidence="2">
    <location>
        <begin position="1"/>
        <end position="38"/>
    </location>
</feature>
<feature type="chain" id="PRO_0000411904" description="Pheromone-processing carboxypeptidase kex1">
    <location>
        <begin position="39"/>
        <end position="632"/>
    </location>
</feature>
<feature type="topological domain" description="Lumenal" evidence="2">
    <location>
        <begin position="39"/>
        <end position="523"/>
    </location>
</feature>
<feature type="transmembrane region" description="Helical" evidence="2">
    <location>
        <begin position="524"/>
        <end position="544"/>
    </location>
</feature>
<feature type="topological domain" description="Cytoplasmic" evidence="2">
    <location>
        <begin position="545"/>
        <end position="632"/>
    </location>
</feature>
<feature type="region of interest" description="Disordered" evidence="4">
    <location>
        <begin position="480"/>
        <end position="509"/>
    </location>
</feature>
<feature type="region of interest" description="Disordered" evidence="4">
    <location>
        <begin position="574"/>
        <end position="632"/>
    </location>
</feature>
<feature type="compositionally biased region" description="Polar residues" evidence="4">
    <location>
        <begin position="492"/>
        <end position="506"/>
    </location>
</feature>
<feature type="compositionally biased region" description="Acidic residues" evidence="4">
    <location>
        <begin position="581"/>
        <end position="590"/>
    </location>
</feature>
<feature type="active site" evidence="3">
    <location>
        <position position="190"/>
    </location>
</feature>
<feature type="active site" evidence="3">
    <location>
        <position position="390"/>
    </location>
</feature>
<feature type="active site" evidence="3">
    <location>
        <position position="452"/>
    </location>
</feature>
<feature type="glycosylation site" description="N-linked (GlcNAc...) asparagine" evidence="2">
    <location>
        <position position="19"/>
    </location>
</feature>
<feature type="glycosylation site" description="N-linked (GlcNAc...) asparagine" evidence="2">
    <location>
        <position position="119"/>
    </location>
</feature>
<feature type="glycosylation site" description="N-linked (GlcNAc...) asparagine" evidence="2">
    <location>
        <position position="126"/>
    </location>
</feature>
<feature type="glycosylation site" description="N-linked (GlcNAc...) asparagine" evidence="2">
    <location>
        <position position="441"/>
    </location>
</feature>
<feature type="glycosylation site" description="N-linked (GlcNAc...) asparagine" evidence="2">
    <location>
        <position position="449"/>
    </location>
</feature>
<feature type="glycosylation site" description="N-linked (GlcNAc...) asparagine" evidence="2">
    <location>
        <position position="501"/>
    </location>
</feature>
<organism>
    <name type="scientific">Aspergillus fumigatus (strain ATCC MYA-4609 / CBS 101355 / FGSC A1100 / Af293)</name>
    <name type="common">Neosartorya fumigata</name>
    <dbReference type="NCBI Taxonomy" id="330879"/>
    <lineage>
        <taxon>Eukaryota</taxon>
        <taxon>Fungi</taxon>
        <taxon>Dikarya</taxon>
        <taxon>Ascomycota</taxon>
        <taxon>Pezizomycotina</taxon>
        <taxon>Eurotiomycetes</taxon>
        <taxon>Eurotiomycetidae</taxon>
        <taxon>Eurotiales</taxon>
        <taxon>Aspergillaceae</taxon>
        <taxon>Aspergillus</taxon>
        <taxon>Aspergillus subgen. Fumigati</taxon>
    </lineage>
</organism>
<evidence type="ECO:0000250" key="1"/>
<evidence type="ECO:0000255" key="2"/>
<evidence type="ECO:0000255" key="3">
    <source>
        <dbReference type="PROSITE-ProRule" id="PRU10074"/>
    </source>
</evidence>
<evidence type="ECO:0000256" key="4">
    <source>
        <dbReference type="SAM" id="MobiDB-lite"/>
    </source>
</evidence>
<evidence type="ECO:0000305" key="5"/>
<keyword id="KW-0053">Apoptosis</keyword>
<keyword id="KW-0121">Carboxypeptidase</keyword>
<keyword id="KW-0325">Glycoprotein</keyword>
<keyword id="KW-0333">Golgi apparatus</keyword>
<keyword id="KW-0378">Hydrolase</keyword>
<keyword id="KW-0472">Membrane</keyword>
<keyword id="KW-0645">Protease</keyword>
<keyword id="KW-1185">Reference proteome</keyword>
<keyword id="KW-0732">Signal</keyword>
<keyword id="KW-0812">Transmembrane</keyword>
<keyword id="KW-1133">Transmembrane helix</keyword>
<sequence>MLLTTPSSRGSRAQSGIANVSWLALSLLLLFSPTLGSAKSAADYYVRSLPGAPEGPLLKMHAGHIEVDAQNNGNLFFWHYQNRHIANRQRTVIWLNGGPGCSSMDGALMEIGPYRLKDNHTLEYNNGSWDEFANLLFVDQPVGTGFSYVNTNSYIHELDEMSAQFITFLEKWFQLFPEYEGDDIYIAGESYAGQHIPYIAKAIQERNNKIQNDQSIRWNLRGIVIGNGWISPAQQYPSYLTFAYEEGLVTKGSSLAKDLEVYQSVCESKISASPNAINIRDCEEILQQILARTKDTNKQCYNMYDVRLRDTYPSCGMNWPTDLVDVKPYLQRPDVVQALNINPEKKSGWEECSGAVSSTFNAANSLPSVQLLPELLESGIPILLFSGDKDLICNHVGTEQLINNMKWNGGTGFETSPGVWAPRHDWTFEGEPAGIYQYARNLTYVLFYNASHMVPYDLPRQSRDMLDRFMKVDIANIGGKPADSRIDGEKLPQTSVGGHPNSTAAEQQAKEKIKETEWKAYAKSGEAALIVVIIGVTVWGFFIWRSRRRNRGYQGVYQRDIGSGSILERFHNKRSGPADVEAGDFDESELDNLHSPGLEQEHYAVGDDSDEESPNHQPAAPPSSTKPGGAQP</sequence>
<dbReference type="EC" id="3.4.16.6"/>
<dbReference type="EMBL" id="AAHF01000004">
    <property type="protein sequence ID" value="EAL90223.1"/>
    <property type="molecule type" value="Genomic_DNA"/>
</dbReference>
<dbReference type="RefSeq" id="XP_752261.1">
    <property type="nucleotide sequence ID" value="XM_747168.1"/>
</dbReference>
<dbReference type="SMR" id="Q4WTK9"/>
<dbReference type="FunCoup" id="Q4WTK9">
    <property type="interactions" value="115"/>
</dbReference>
<dbReference type="STRING" id="330879.Q4WTK9"/>
<dbReference type="ESTHER" id="aspfu-kex1">
    <property type="family name" value="Carboxypeptidase_S10"/>
</dbReference>
<dbReference type="MEROPS" id="S10.007"/>
<dbReference type="GlyCosmos" id="Q4WTK9">
    <property type="glycosylation" value="6 sites, No reported glycans"/>
</dbReference>
<dbReference type="EnsemblFungi" id="EAL90223">
    <property type="protein sequence ID" value="EAL90223"/>
    <property type="gene ID" value="AFUA_1G08940"/>
</dbReference>
<dbReference type="GeneID" id="3510479"/>
<dbReference type="KEGG" id="afm:AFUA_1G08940"/>
<dbReference type="VEuPathDB" id="FungiDB:Afu1g08940"/>
<dbReference type="eggNOG" id="KOG1282">
    <property type="taxonomic scope" value="Eukaryota"/>
</dbReference>
<dbReference type="HOGENOM" id="CLU_008523_11_0_1"/>
<dbReference type="InParanoid" id="Q4WTK9"/>
<dbReference type="OMA" id="EMADQFV"/>
<dbReference type="OrthoDB" id="443318at2759"/>
<dbReference type="Proteomes" id="UP000002530">
    <property type="component" value="Chromosome 1"/>
</dbReference>
<dbReference type="GO" id="GO:0016020">
    <property type="term" value="C:membrane"/>
    <property type="evidence" value="ECO:0007669"/>
    <property type="project" value="UniProtKB-KW"/>
</dbReference>
<dbReference type="GO" id="GO:0005802">
    <property type="term" value="C:trans-Golgi network"/>
    <property type="evidence" value="ECO:0000318"/>
    <property type="project" value="GO_Central"/>
</dbReference>
<dbReference type="GO" id="GO:0004185">
    <property type="term" value="F:serine-type carboxypeptidase activity"/>
    <property type="evidence" value="ECO:0000318"/>
    <property type="project" value="GO_Central"/>
</dbReference>
<dbReference type="GO" id="GO:0006915">
    <property type="term" value="P:apoptotic process"/>
    <property type="evidence" value="ECO:0007669"/>
    <property type="project" value="UniProtKB-KW"/>
</dbReference>
<dbReference type="GO" id="GO:0006508">
    <property type="term" value="P:proteolysis"/>
    <property type="evidence" value="ECO:0007669"/>
    <property type="project" value="UniProtKB-KW"/>
</dbReference>
<dbReference type="FunFam" id="3.40.50.1820:FF:000121">
    <property type="entry name" value="Carboxypeptidase D"/>
    <property type="match status" value="1"/>
</dbReference>
<dbReference type="Gene3D" id="3.40.50.1820">
    <property type="entry name" value="alpha/beta hydrolase"/>
    <property type="match status" value="1"/>
</dbReference>
<dbReference type="InterPro" id="IPR029058">
    <property type="entry name" value="AB_hydrolase_fold"/>
</dbReference>
<dbReference type="InterPro" id="IPR001563">
    <property type="entry name" value="Peptidase_S10"/>
</dbReference>
<dbReference type="InterPro" id="IPR018202">
    <property type="entry name" value="Ser_caboxypep_ser_AS"/>
</dbReference>
<dbReference type="PANTHER" id="PTHR11802:SF190">
    <property type="entry name" value="PHEROMONE-PROCESSING CARBOXYPEPTIDASE KEX1"/>
    <property type="match status" value="1"/>
</dbReference>
<dbReference type="PANTHER" id="PTHR11802">
    <property type="entry name" value="SERINE PROTEASE FAMILY S10 SERINE CARBOXYPEPTIDASE"/>
    <property type="match status" value="1"/>
</dbReference>
<dbReference type="Pfam" id="PF00450">
    <property type="entry name" value="Peptidase_S10"/>
    <property type="match status" value="1"/>
</dbReference>
<dbReference type="PRINTS" id="PR00724">
    <property type="entry name" value="CRBOXYPTASEC"/>
</dbReference>
<dbReference type="SUPFAM" id="SSF53474">
    <property type="entry name" value="alpha/beta-Hydrolases"/>
    <property type="match status" value="1"/>
</dbReference>
<dbReference type="PROSITE" id="PS00131">
    <property type="entry name" value="CARBOXYPEPT_SER_SER"/>
    <property type="match status" value="1"/>
</dbReference>
<accession>Q4WTK9</accession>
<gene>
    <name type="primary">kex1</name>
    <name type="ORF">AFUA_1G08940</name>
</gene>
<comment type="function">
    <text evidence="1">Protease with a carboxypeptidase B-like function involved in the C-terminal processing of the lysine and arginine residues from protein precursors. Promotes cell fusion and is involved in the programmed cell death (By similarity).</text>
</comment>
<comment type="catalytic activity">
    <reaction>
        <text>Preferential release of a C-terminal arginine or lysine residue.</text>
        <dbReference type="EC" id="3.4.16.6"/>
    </reaction>
</comment>
<comment type="subcellular location">
    <subcellularLocation>
        <location evidence="1">Golgi apparatus</location>
        <location evidence="1">trans-Golgi network membrane</location>
        <topology evidence="1">Single-pass type I membrane protein</topology>
    </subcellularLocation>
</comment>
<comment type="similarity">
    <text evidence="5">Belongs to the peptidase S10 family.</text>
</comment>